<sequence>MAAYKLVLIRHGESTWNLENRFSGWYDADLSPAGHEEAKRGGQALRDAGYEFDICFTSVQKRAIRTLWTVLDAIDQMWLPVVRTWRLNERHYGGLTGLNKAETAAKHGEAQVKIWRRSYDVPPPPMEPDHPFYSNISKDRRYADLTEDQLPSCESLKDTIARALPFWNEEIVPQIKEGKRVLIAAHGNSLRGIVKHLEGLSEEAIMELNLPTGIPMVYELDKNLKPIKPMQFLGDEETVRKAMEAVAAQGKAKK</sequence>
<protein>
    <recommendedName>
        <fullName evidence="3">Phosphoglycerate mutase 1</fullName>
        <ecNumber evidence="3">5.4.2.11</ecNumber>
        <ecNumber evidence="3">5.4.2.4</ecNumber>
    </recommendedName>
    <alternativeName>
        <fullName>BPG-dependent PGAM 1</fullName>
    </alternativeName>
    <alternativeName>
        <fullName>Phosphoglycerate mutase isozyme B</fullName>
        <shortName>PGAM-B</shortName>
    </alternativeName>
</protein>
<comment type="function">
    <text evidence="3">Catalyzes the interconversion of 2-phosphoglycerate and 3-phosphoglyceratea crucial step in glycolysis, by using 2,3-bisphosphoglycerate. Also catalyzes the interconversion of (2R)-2,3-bisphosphoglycerate and (2R)-3-phospho-glyceroyl phosphate.</text>
</comment>
<comment type="catalytic activity">
    <reaction evidence="3">
        <text>(2R)-2-phosphoglycerate = (2R)-3-phosphoglycerate</text>
        <dbReference type="Rhea" id="RHEA:15901"/>
        <dbReference type="ChEBI" id="CHEBI:58272"/>
        <dbReference type="ChEBI" id="CHEBI:58289"/>
        <dbReference type="EC" id="5.4.2.11"/>
    </reaction>
    <physiologicalReaction direction="right-to-left" evidence="3">
        <dbReference type="Rhea" id="RHEA:15903"/>
    </physiologicalReaction>
</comment>
<comment type="catalytic activity">
    <reaction evidence="3">
        <text>(2R)-3-phospho-glyceroyl phosphate = (2R)-2,3-bisphosphoglycerate + H(+)</text>
        <dbReference type="Rhea" id="RHEA:17765"/>
        <dbReference type="ChEBI" id="CHEBI:15378"/>
        <dbReference type="ChEBI" id="CHEBI:57604"/>
        <dbReference type="ChEBI" id="CHEBI:58248"/>
        <dbReference type="EC" id="5.4.2.4"/>
    </reaction>
</comment>
<comment type="subunit">
    <text evidence="3">Homodimer.</text>
</comment>
<comment type="PTM">
    <text evidence="1">Acetylated at Lys-253, Lys-253 and Lys-254 under high glucose condition. Acetylation increases catalytic activity. Under glucose restriction SIRT1 levels dramatically increase and it deacetylates the enzyme (By similarity).</text>
</comment>
<comment type="similarity">
    <text evidence="5">Belongs to the phosphoglycerate mutase family. BPG-dependent PGAM subfamily.</text>
</comment>
<name>PGAM1_BOVIN</name>
<reference key="1">
    <citation type="submission" date="2005-08" db="EMBL/GenBank/DDBJ databases">
        <authorList>
            <consortium name="NIH - Mammalian Gene Collection (MGC) project"/>
        </authorList>
    </citation>
    <scope>NUCLEOTIDE SEQUENCE [LARGE SCALE MRNA]</scope>
    <source>
        <strain>Hereford</strain>
        <tissue>Heart ventricle</tissue>
    </source>
</reference>
<gene>
    <name evidence="3" type="primary">PGAM1</name>
</gene>
<accession>Q3SZ62</accession>
<proteinExistence type="evidence at transcript level"/>
<feature type="chain" id="PRO_0000246079" description="Phosphoglycerate mutase 1">
    <location>
        <begin position="1"/>
        <end position="254"/>
    </location>
</feature>
<feature type="active site" description="Tele-phosphohistidine intermediate" evidence="3">
    <location>
        <position position="11"/>
    </location>
</feature>
<feature type="active site" description="Proton donor/acceptor" evidence="3">
    <location>
        <position position="89"/>
    </location>
</feature>
<feature type="binding site" evidence="2">
    <location>
        <begin position="10"/>
        <end position="17"/>
    </location>
    <ligand>
        <name>substrate</name>
    </ligand>
</feature>
<feature type="binding site" evidence="2">
    <location>
        <begin position="23"/>
        <end position="24"/>
    </location>
    <ligand>
        <name>substrate</name>
    </ligand>
</feature>
<feature type="binding site" evidence="2">
    <location>
        <position position="62"/>
    </location>
    <ligand>
        <name>substrate</name>
    </ligand>
</feature>
<feature type="binding site" evidence="2">
    <location>
        <begin position="89"/>
        <end position="92"/>
    </location>
    <ligand>
        <name>substrate</name>
    </ligand>
</feature>
<feature type="binding site" evidence="2">
    <location>
        <position position="100"/>
    </location>
    <ligand>
        <name>substrate</name>
    </ligand>
</feature>
<feature type="binding site" evidence="2">
    <location>
        <begin position="116"/>
        <end position="117"/>
    </location>
    <ligand>
        <name>substrate</name>
    </ligand>
</feature>
<feature type="binding site" evidence="2">
    <location>
        <begin position="187"/>
        <end position="188"/>
    </location>
    <ligand>
        <name>substrate</name>
    </ligand>
</feature>
<feature type="site" description="Transition state stabilizer" evidence="2">
    <location>
        <position position="186"/>
    </location>
</feature>
<feature type="modified residue" description="Phosphoserine" evidence="3">
    <location>
        <position position="14"/>
    </location>
</feature>
<feature type="modified residue" description="Phosphoserine" evidence="3">
    <location>
        <position position="23"/>
    </location>
</feature>
<feature type="modified residue" description="Phosphotyrosine" evidence="3">
    <location>
        <position position="26"/>
    </location>
</feature>
<feature type="modified residue" description="Phosphoserine" evidence="3">
    <location>
        <position position="31"/>
    </location>
</feature>
<feature type="modified residue" description="N6-acetyllysine" evidence="4">
    <location>
        <position position="106"/>
    </location>
</feature>
<feature type="modified residue" description="Phosphoserine" evidence="4">
    <location>
        <position position="118"/>
    </location>
</feature>
<feature type="modified residue" description="N6-acetyllysine; alternate" evidence="3">
    <location>
        <position position="251"/>
    </location>
</feature>
<feature type="modified residue" description="N6-succinyllysine; alternate" evidence="4">
    <location>
        <position position="251"/>
    </location>
</feature>
<feature type="modified residue" description="N6-acetyllysine" evidence="3">
    <location>
        <position position="253"/>
    </location>
</feature>
<feature type="modified residue" description="N6-acetyllysine" evidence="3">
    <location>
        <position position="254"/>
    </location>
</feature>
<evidence type="ECO:0000250" key="1"/>
<evidence type="ECO:0000250" key="2">
    <source>
        <dbReference type="UniProtKB" id="P00950"/>
    </source>
</evidence>
<evidence type="ECO:0000250" key="3">
    <source>
        <dbReference type="UniProtKB" id="P18669"/>
    </source>
</evidence>
<evidence type="ECO:0000250" key="4">
    <source>
        <dbReference type="UniProtKB" id="Q9DBJ1"/>
    </source>
</evidence>
<evidence type="ECO:0000305" key="5"/>
<dbReference type="EC" id="5.4.2.11" evidence="3"/>
<dbReference type="EC" id="5.4.2.4" evidence="3"/>
<dbReference type="EMBL" id="BC103115">
    <property type="protein sequence ID" value="AAI03116.1"/>
    <property type="molecule type" value="mRNA"/>
</dbReference>
<dbReference type="RefSeq" id="NP_001029226.1">
    <property type="nucleotide sequence ID" value="NM_001034054.1"/>
</dbReference>
<dbReference type="SMR" id="Q3SZ62"/>
<dbReference type="BioGRID" id="160403">
    <property type="interactions" value="1"/>
</dbReference>
<dbReference type="FunCoup" id="Q3SZ62">
    <property type="interactions" value="1583"/>
</dbReference>
<dbReference type="IntAct" id="Q3SZ62">
    <property type="interactions" value="1"/>
</dbReference>
<dbReference type="STRING" id="9913.ENSBTAP00000032864"/>
<dbReference type="PaxDb" id="9913-ENSBTAP00000032864"/>
<dbReference type="PeptideAtlas" id="Q3SZ62"/>
<dbReference type="Ensembl" id="ENSBTAT00000032937.4">
    <property type="protein sequence ID" value="ENSBTAP00000032864.2"/>
    <property type="gene ID" value="ENSBTAG00000012697.7"/>
</dbReference>
<dbReference type="GeneID" id="404148"/>
<dbReference type="KEGG" id="bta:404148"/>
<dbReference type="CTD" id="5223"/>
<dbReference type="VEuPathDB" id="HostDB:ENSBTAG00000012697"/>
<dbReference type="VGNC" id="VGNC:55961">
    <property type="gene designation" value="PGAM1"/>
</dbReference>
<dbReference type="eggNOG" id="KOG0235">
    <property type="taxonomic scope" value="Eukaryota"/>
</dbReference>
<dbReference type="GeneTree" id="ENSGT00950000182926"/>
<dbReference type="HOGENOM" id="CLU_033323_1_1_1"/>
<dbReference type="InParanoid" id="Q3SZ62"/>
<dbReference type="OMA" id="MLPYWYD"/>
<dbReference type="OrthoDB" id="354304at2759"/>
<dbReference type="TreeFam" id="TF300007"/>
<dbReference type="Reactome" id="R-BTA-6798695">
    <property type="pathway name" value="Neutrophil degranulation"/>
</dbReference>
<dbReference type="Reactome" id="R-BTA-70171">
    <property type="pathway name" value="Glycolysis"/>
</dbReference>
<dbReference type="Reactome" id="R-BTA-70263">
    <property type="pathway name" value="Gluconeogenesis"/>
</dbReference>
<dbReference type="Proteomes" id="UP000009136">
    <property type="component" value="Chromosome 26"/>
</dbReference>
<dbReference type="Bgee" id="ENSBTAG00000012697">
    <property type="expression patterns" value="Expressed in retina and 104 other cell types or tissues"/>
</dbReference>
<dbReference type="GO" id="GO:0005829">
    <property type="term" value="C:cytosol"/>
    <property type="evidence" value="ECO:0007669"/>
    <property type="project" value="Ensembl"/>
</dbReference>
<dbReference type="GO" id="GO:0004082">
    <property type="term" value="F:bisphosphoglycerate mutase activity"/>
    <property type="evidence" value="ECO:0000250"/>
    <property type="project" value="UniProtKB"/>
</dbReference>
<dbReference type="GO" id="GO:0016787">
    <property type="term" value="F:hydrolase activity"/>
    <property type="evidence" value="ECO:0007669"/>
    <property type="project" value="UniProtKB-KW"/>
</dbReference>
<dbReference type="GO" id="GO:0004619">
    <property type="term" value="F:phosphoglycerate mutase activity"/>
    <property type="evidence" value="ECO:0000250"/>
    <property type="project" value="UniProtKB"/>
</dbReference>
<dbReference type="GO" id="GO:0019901">
    <property type="term" value="F:protein kinase binding"/>
    <property type="evidence" value="ECO:0007669"/>
    <property type="project" value="Ensembl"/>
</dbReference>
<dbReference type="GO" id="GO:0061621">
    <property type="term" value="P:canonical glycolysis"/>
    <property type="evidence" value="ECO:0007669"/>
    <property type="project" value="Ensembl"/>
</dbReference>
<dbReference type="GO" id="GO:0006094">
    <property type="term" value="P:gluconeogenesis"/>
    <property type="evidence" value="ECO:0007669"/>
    <property type="project" value="Ensembl"/>
</dbReference>
<dbReference type="CDD" id="cd07067">
    <property type="entry name" value="HP_PGM_like"/>
    <property type="match status" value="1"/>
</dbReference>
<dbReference type="FunFam" id="3.40.50.1240:FF:000007">
    <property type="entry name" value="Phosphoglycerate mutase"/>
    <property type="match status" value="1"/>
</dbReference>
<dbReference type="Gene3D" id="3.40.50.1240">
    <property type="entry name" value="Phosphoglycerate mutase-like"/>
    <property type="match status" value="1"/>
</dbReference>
<dbReference type="HAMAP" id="MF_01039">
    <property type="entry name" value="PGAM_GpmA"/>
    <property type="match status" value="1"/>
</dbReference>
<dbReference type="InterPro" id="IPR013078">
    <property type="entry name" value="His_Pase_superF_clade-1"/>
</dbReference>
<dbReference type="InterPro" id="IPR029033">
    <property type="entry name" value="His_PPase_superfam"/>
</dbReference>
<dbReference type="InterPro" id="IPR001345">
    <property type="entry name" value="PG/BPGM_mutase_AS"/>
</dbReference>
<dbReference type="InterPro" id="IPR005952">
    <property type="entry name" value="Phosphogly_mut1"/>
</dbReference>
<dbReference type="NCBIfam" id="TIGR01258">
    <property type="entry name" value="pgm_1"/>
    <property type="match status" value="1"/>
</dbReference>
<dbReference type="NCBIfam" id="NF010713">
    <property type="entry name" value="PRK14115.1"/>
    <property type="match status" value="1"/>
</dbReference>
<dbReference type="PANTHER" id="PTHR11931">
    <property type="entry name" value="PHOSPHOGLYCERATE MUTASE"/>
    <property type="match status" value="1"/>
</dbReference>
<dbReference type="Pfam" id="PF00300">
    <property type="entry name" value="His_Phos_1"/>
    <property type="match status" value="2"/>
</dbReference>
<dbReference type="PIRSF" id="PIRSF000709">
    <property type="entry name" value="6PFK_2-Ptase"/>
    <property type="match status" value="1"/>
</dbReference>
<dbReference type="SMART" id="SM00855">
    <property type="entry name" value="PGAM"/>
    <property type="match status" value="1"/>
</dbReference>
<dbReference type="SUPFAM" id="SSF53254">
    <property type="entry name" value="Phosphoglycerate mutase-like"/>
    <property type="match status" value="1"/>
</dbReference>
<dbReference type="PROSITE" id="PS00175">
    <property type="entry name" value="PG_MUTASE"/>
    <property type="match status" value="1"/>
</dbReference>
<keyword id="KW-0007">Acetylation</keyword>
<keyword id="KW-0324">Glycolysis</keyword>
<keyword id="KW-0378">Hydrolase</keyword>
<keyword id="KW-0413">Isomerase</keyword>
<keyword id="KW-0597">Phosphoprotein</keyword>
<keyword id="KW-1185">Reference proteome</keyword>
<organism>
    <name type="scientific">Bos taurus</name>
    <name type="common">Bovine</name>
    <dbReference type="NCBI Taxonomy" id="9913"/>
    <lineage>
        <taxon>Eukaryota</taxon>
        <taxon>Metazoa</taxon>
        <taxon>Chordata</taxon>
        <taxon>Craniata</taxon>
        <taxon>Vertebrata</taxon>
        <taxon>Euteleostomi</taxon>
        <taxon>Mammalia</taxon>
        <taxon>Eutheria</taxon>
        <taxon>Laurasiatheria</taxon>
        <taxon>Artiodactyla</taxon>
        <taxon>Ruminantia</taxon>
        <taxon>Pecora</taxon>
        <taxon>Bovidae</taxon>
        <taxon>Bovinae</taxon>
        <taxon>Bos</taxon>
    </lineage>
</organism>